<reference key="1">
    <citation type="journal article" date="2011" name="PLoS ONE">
        <title>The genome of Akkermansia muciniphila, a dedicated intestinal mucin degrader, and its use in exploring intestinal metagenomes.</title>
        <authorList>
            <person name="van Passel M.W."/>
            <person name="Kant R."/>
            <person name="Zoetendal E.G."/>
            <person name="Plugge C.M."/>
            <person name="Derrien M."/>
            <person name="Malfatti S.A."/>
            <person name="Chain P.S."/>
            <person name="Woyke T."/>
            <person name="Palva A."/>
            <person name="de Vos W.M."/>
            <person name="Smidt H."/>
        </authorList>
    </citation>
    <scope>NUCLEOTIDE SEQUENCE [LARGE SCALE GENOMIC DNA]</scope>
    <source>
        <strain>ATCC BAA-835 / DSM 22959 / JCM 33894 / BCRC 81048 / CCUG 64013 / CIP 107961 / Muc</strain>
    </source>
</reference>
<protein>
    <recommendedName>
        <fullName evidence="1">Polyribonucleotide nucleotidyltransferase</fullName>
        <ecNumber evidence="1">2.7.7.8</ecNumber>
    </recommendedName>
    <alternativeName>
        <fullName evidence="1">Polynucleotide phosphorylase</fullName>
        <shortName evidence="1">PNPase</shortName>
    </alternativeName>
</protein>
<comment type="function">
    <text evidence="1">Involved in mRNA degradation. Catalyzes the phosphorolysis of single-stranded polyribonucleotides processively in the 3'- to 5'-direction.</text>
</comment>
<comment type="catalytic activity">
    <reaction evidence="1">
        <text>RNA(n+1) + phosphate = RNA(n) + a ribonucleoside 5'-diphosphate</text>
        <dbReference type="Rhea" id="RHEA:22096"/>
        <dbReference type="Rhea" id="RHEA-COMP:14527"/>
        <dbReference type="Rhea" id="RHEA-COMP:17342"/>
        <dbReference type="ChEBI" id="CHEBI:43474"/>
        <dbReference type="ChEBI" id="CHEBI:57930"/>
        <dbReference type="ChEBI" id="CHEBI:140395"/>
        <dbReference type="EC" id="2.7.7.8"/>
    </reaction>
</comment>
<comment type="cofactor">
    <cofactor evidence="1">
        <name>Mg(2+)</name>
        <dbReference type="ChEBI" id="CHEBI:18420"/>
    </cofactor>
</comment>
<comment type="subcellular location">
    <subcellularLocation>
        <location evidence="1">Cytoplasm</location>
    </subcellularLocation>
</comment>
<comment type="similarity">
    <text evidence="1">Belongs to the polyribonucleotide nucleotidyltransferase family.</text>
</comment>
<dbReference type="EC" id="2.7.7.8" evidence="1"/>
<dbReference type="EMBL" id="CP001071">
    <property type="protein sequence ID" value="ACD04221.1"/>
    <property type="molecule type" value="Genomic_DNA"/>
</dbReference>
<dbReference type="RefSeq" id="WP_012419436.1">
    <property type="nucleotide sequence ID" value="NZ_CP071807.1"/>
</dbReference>
<dbReference type="SMR" id="B2UNA9"/>
<dbReference type="STRING" id="349741.Amuc_0382"/>
<dbReference type="PaxDb" id="349741-Amuc_0382"/>
<dbReference type="KEGG" id="amu:Amuc_0382"/>
<dbReference type="eggNOG" id="COG1185">
    <property type="taxonomic scope" value="Bacteria"/>
</dbReference>
<dbReference type="HOGENOM" id="CLU_004217_2_2_0"/>
<dbReference type="OrthoDB" id="9804305at2"/>
<dbReference type="BioCyc" id="AMUC349741:G1GBX-426-MONOMER"/>
<dbReference type="Proteomes" id="UP000001031">
    <property type="component" value="Chromosome"/>
</dbReference>
<dbReference type="GO" id="GO:0005829">
    <property type="term" value="C:cytosol"/>
    <property type="evidence" value="ECO:0007669"/>
    <property type="project" value="TreeGrafter"/>
</dbReference>
<dbReference type="GO" id="GO:0000175">
    <property type="term" value="F:3'-5'-RNA exonuclease activity"/>
    <property type="evidence" value="ECO:0007669"/>
    <property type="project" value="TreeGrafter"/>
</dbReference>
<dbReference type="GO" id="GO:0000287">
    <property type="term" value="F:magnesium ion binding"/>
    <property type="evidence" value="ECO:0007669"/>
    <property type="project" value="UniProtKB-UniRule"/>
</dbReference>
<dbReference type="GO" id="GO:0004654">
    <property type="term" value="F:polyribonucleotide nucleotidyltransferase activity"/>
    <property type="evidence" value="ECO:0007669"/>
    <property type="project" value="UniProtKB-UniRule"/>
</dbReference>
<dbReference type="GO" id="GO:0003723">
    <property type="term" value="F:RNA binding"/>
    <property type="evidence" value="ECO:0007669"/>
    <property type="project" value="UniProtKB-UniRule"/>
</dbReference>
<dbReference type="GO" id="GO:0006402">
    <property type="term" value="P:mRNA catabolic process"/>
    <property type="evidence" value="ECO:0007669"/>
    <property type="project" value="UniProtKB-UniRule"/>
</dbReference>
<dbReference type="GO" id="GO:0006396">
    <property type="term" value="P:RNA processing"/>
    <property type="evidence" value="ECO:0007669"/>
    <property type="project" value="InterPro"/>
</dbReference>
<dbReference type="CDD" id="cd02393">
    <property type="entry name" value="KH-I_PNPase"/>
    <property type="match status" value="1"/>
</dbReference>
<dbReference type="CDD" id="cd11363">
    <property type="entry name" value="RNase_PH_PNPase_1"/>
    <property type="match status" value="1"/>
</dbReference>
<dbReference type="CDD" id="cd11364">
    <property type="entry name" value="RNase_PH_PNPase_2"/>
    <property type="match status" value="1"/>
</dbReference>
<dbReference type="CDD" id="cd04472">
    <property type="entry name" value="S1_PNPase"/>
    <property type="match status" value="1"/>
</dbReference>
<dbReference type="FunFam" id="3.30.1370.10:FF:000001">
    <property type="entry name" value="Polyribonucleotide nucleotidyltransferase"/>
    <property type="match status" value="1"/>
</dbReference>
<dbReference type="FunFam" id="3.30.230.70:FF:000001">
    <property type="entry name" value="Polyribonucleotide nucleotidyltransferase"/>
    <property type="match status" value="1"/>
</dbReference>
<dbReference type="FunFam" id="2.40.50.140:FF:000189">
    <property type="entry name" value="Polyribonucleotide nucleotidyltransferase, putative"/>
    <property type="match status" value="1"/>
</dbReference>
<dbReference type="Gene3D" id="3.30.230.70">
    <property type="entry name" value="GHMP Kinase, N-terminal domain"/>
    <property type="match status" value="2"/>
</dbReference>
<dbReference type="Gene3D" id="3.30.1370.10">
    <property type="entry name" value="K Homology domain, type 1"/>
    <property type="match status" value="1"/>
</dbReference>
<dbReference type="Gene3D" id="2.40.50.140">
    <property type="entry name" value="Nucleic acid-binding proteins"/>
    <property type="match status" value="1"/>
</dbReference>
<dbReference type="HAMAP" id="MF_01595">
    <property type="entry name" value="PNPase"/>
    <property type="match status" value="1"/>
</dbReference>
<dbReference type="InterPro" id="IPR001247">
    <property type="entry name" value="ExoRNase_PH_dom1"/>
</dbReference>
<dbReference type="InterPro" id="IPR015847">
    <property type="entry name" value="ExoRNase_PH_dom2"/>
</dbReference>
<dbReference type="InterPro" id="IPR036345">
    <property type="entry name" value="ExoRNase_PH_dom2_sf"/>
</dbReference>
<dbReference type="InterPro" id="IPR004087">
    <property type="entry name" value="KH_dom"/>
</dbReference>
<dbReference type="InterPro" id="IPR004088">
    <property type="entry name" value="KH_dom_type_1"/>
</dbReference>
<dbReference type="InterPro" id="IPR036612">
    <property type="entry name" value="KH_dom_type_1_sf"/>
</dbReference>
<dbReference type="InterPro" id="IPR012340">
    <property type="entry name" value="NA-bd_OB-fold"/>
</dbReference>
<dbReference type="InterPro" id="IPR012162">
    <property type="entry name" value="PNPase"/>
</dbReference>
<dbReference type="InterPro" id="IPR027408">
    <property type="entry name" value="PNPase/RNase_PH_dom_sf"/>
</dbReference>
<dbReference type="InterPro" id="IPR015848">
    <property type="entry name" value="PNPase_PH_RNA-bd_bac/org-type"/>
</dbReference>
<dbReference type="InterPro" id="IPR036456">
    <property type="entry name" value="PNPase_PH_RNA-bd_sf"/>
</dbReference>
<dbReference type="InterPro" id="IPR020568">
    <property type="entry name" value="Ribosomal_Su5_D2-typ_SF"/>
</dbReference>
<dbReference type="InterPro" id="IPR003029">
    <property type="entry name" value="S1_domain"/>
</dbReference>
<dbReference type="NCBIfam" id="TIGR03591">
    <property type="entry name" value="polynuc_phos"/>
    <property type="match status" value="1"/>
</dbReference>
<dbReference type="NCBIfam" id="NF008805">
    <property type="entry name" value="PRK11824.1"/>
    <property type="match status" value="1"/>
</dbReference>
<dbReference type="PANTHER" id="PTHR11252">
    <property type="entry name" value="POLYRIBONUCLEOTIDE NUCLEOTIDYLTRANSFERASE"/>
    <property type="match status" value="1"/>
</dbReference>
<dbReference type="PANTHER" id="PTHR11252:SF0">
    <property type="entry name" value="POLYRIBONUCLEOTIDE NUCLEOTIDYLTRANSFERASE 1, MITOCHONDRIAL"/>
    <property type="match status" value="1"/>
</dbReference>
<dbReference type="Pfam" id="PF00013">
    <property type="entry name" value="KH_1"/>
    <property type="match status" value="1"/>
</dbReference>
<dbReference type="Pfam" id="PF03726">
    <property type="entry name" value="PNPase"/>
    <property type="match status" value="1"/>
</dbReference>
<dbReference type="Pfam" id="PF01138">
    <property type="entry name" value="RNase_PH"/>
    <property type="match status" value="2"/>
</dbReference>
<dbReference type="Pfam" id="PF03725">
    <property type="entry name" value="RNase_PH_C"/>
    <property type="match status" value="1"/>
</dbReference>
<dbReference type="Pfam" id="PF00575">
    <property type="entry name" value="S1"/>
    <property type="match status" value="1"/>
</dbReference>
<dbReference type="PIRSF" id="PIRSF005499">
    <property type="entry name" value="PNPase"/>
    <property type="match status" value="1"/>
</dbReference>
<dbReference type="SMART" id="SM00322">
    <property type="entry name" value="KH"/>
    <property type="match status" value="1"/>
</dbReference>
<dbReference type="SMART" id="SM00316">
    <property type="entry name" value="S1"/>
    <property type="match status" value="1"/>
</dbReference>
<dbReference type="SUPFAM" id="SSF54791">
    <property type="entry name" value="Eukaryotic type KH-domain (KH-domain type I)"/>
    <property type="match status" value="1"/>
</dbReference>
<dbReference type="SUPFAM" id="SSF50249">
    <property type="entry name" value="Nucleic acid-binding proteins"/>
    <property type="match status" value="1"/>
</dbReference>
<dbReference type="SUPFAM" id="SSF46915">
    <property type="entry name" value="Polynucleotide phosphorylase/guanosine pentaphosphate synthase (PNPase/GPSI), domain 3"/>
    <property type="match status" value="1"/>
</dbReference>
<dbReference type="SUPFAM" id="SSF55666">
    <property type="entry name" value="Ribonuclease PH domain 2-like"/>
    <property type="match status" value="2"/>
</dbReference>
<dbReference type="SUPFAM" id="SSF54211">
    <property type="entry name" value="Ribosomal protein S5 domain 2-like"/>
    <property type="match status" value="2"/>
</dbReference>
<dbReference type="PROSITE" id="PS50084">
    <property type="entry name" value="KH_TYPE_1"/>
    <property type="match status" value="1"/>
</dbReference>
<dbReference type="PROSITE" id="PS50126">
    <property type="entry name" value="S1"/>
    <property type="match status" value="1"/>
</dbReference>
<evidence type="ECO:0000255" key="1">
    <source>
        <dbReference type="HAMAP-Rule" id="MF_01595"/>
    </source>
</evidence>
<feature type="chain" id="PRO_1000147878" description="Polyribonucleotide nucleotidyltransferase">
    <location>
        <begin position="1"/>
        <end position="714"/>
    </location>
</feature>
<feature type="domain" description="KH" evidence="1">
    <location>
        <begin position="559"/>
        <end position="618"/>
    </location>
</feature>
<feature type="domain" description="S1 motif" evidence="1">
    <location>
        <begin position="628"/>
        <end position="696"/>
    </location>
</feature>
<feature type="binding site" evidence="1">
    <location>
        <position position="493"/>
    </location>
    <ligand>
        <name>Mg(2+)</name>
        <dbReference type="ChEBI" id="CHEBI:18420"/>
    </ligand>
</feature>
<feature type="binding site" evidence="1">
    <location>
        <position position="499"/>
    </location>
    <ligand>
        <name>Mg(2+)</name>
        <dbReference type="ChEBI" id="CHEBI:18420"/>
    </ligand>
</feature>
<accession>B2UNA9</accession>
<organism>
    <name type="scientific">Akkermansia muciniphila (strain ATCC BAA-835 / DSM 22959 / JCM 33894 / BCRC 81048 / CCUG 64013 / CIP 107961 / Muc)</name>
    <dbReference type="NCBI Taxonomy" id="349741"/>
    <lineage>
        <taxon>Bacteria</taxon>
        <taxon>Pseudomonadati</taxon>
        <taxon>Verrucomicrobiota</taxon>
        <taxon>Verrucomicrobiia</taxon>
        <taxon>Verrucomicrobiales</taxon>
        <taxon>Akkermansiaceae</taxon>
        <taxon>Akkermansia</taxon>
    </lineage>
</organism>
<sequence>MSIHSVECNVGTNPITIETGKMARLADGAVVVRSGDTVVLVTVVSATKVKEGQTFFPLSVEYKEKAAAAGMFPGGYFKREGRPTEKEILTCRMTDRPLRPMFPKGYFYDTQVITLLLSADGENEPDILSINGASAACVVSDLPFAEPVGAVRVGRIDGQFVINPTNSQREHSQLDLVFAGTKDQVIMIEGSANELPEEDFIAALRVAQENVKVICEKQEELRAVCGKEKRAYELCLAKPELLEIGYEIAGDRIEEAIYAPSKVERQKKVGALRDEVEAAIKERHPEATDFDVEQVFEYIQKKAFRISIMEKDKRADGRALKQLRPLTAEVNVLPPVVHGSAMFARGETMSLCLATLAPMEERQYMDNYTGSVNEKRFILHYNFPPFSVGDTGRFGGQNRREIGHGALAERSIAPVVPGEQEFPYAIRVSSEIMESNGSTSMASVCAGTMSLLAAGVPLKRPVAGISVGLVTEQNDQHEITSYKTLLDIIGSEDFYGDMDFKLCGTSEGVTGYQLDLKLPGIPLSILEEAIHVAKAGRTDVLKVMNEAIAAPAQMSPNAPRIETTKIPADRIGELIGPGGKNIKAIQAESGADINIEEDGTVHIYAAKQEGLDRALELVTRMFKTIEIGELYTGKIVSTTTFGAFMEVLPGKDGLIHISELAEGRTAKTEDVVSVGDVVTAKCIGIDDKGRVKMSIRAALRDAKAAEAEAAGITE</sequence>
<gene>
    <name evidence="1" type="primary">pnp</name>
    <name type="ordered locus">Amuc_0382</name>
</gene>
<name>PNP_AKKM8</name>
<proteinExistence type="inferred from homology"/>
<keyword id="KW-0963">Cytoplasm</keyword>
<keyword id="KW-0460">Magnesium</keyword>
<keyword id="KW-0479">Metal-binding</keyword>
<keyword id="KW-0548">Nucleotidyltransferase</keyword>
<keyword id="KW-1185">Reference proteome</keyword>
<keyword id="KW-0694">RNA-binding</keyword>
<keyword id="KW-0808">Transferase</keyword>